<feature type="chain" id="PRO_0000307996" description="Large ribosomal subunit protein uL1">
    <location>
        <begin position="1"/>
        <end position="231"/>
    </location>
</feature>
<proteinExistence type="inferred from homology"/>
<accession>A3DIZ1</accession>
<evidence type="ECO:0000255" key="1">
    <source>
        <dbReference type="HAMAP-Rule" id="MF_01318"/>
    </source>
</evidence>
<evidence type="ECO:0000305" key="2"/>
<gene>
    <name evidence="1" type="primary">rplA</name>
    <name type="ordered locus">Cthe_2721</name>
</gene>
<protein>
    <recommendedName>
        <fullName evidence="1">Large ribosomal subunit protein uL1</fullName>
    </recommendedName>
    <alternativeName>
        <fullName evidence="2">50S ribosomal protein L1</fullName>
    </alternativeName>
</protein>
<comment type="function">
    <text evidence="1">Binds directly to 23S rRNA. The L1 stalk is quite mobile in the ribosome, and is involved in E site tRNA release.</text>
</comment>
<comment type="function">
    <text evidence="1">Protein L1 is also a translational repressor protein, it controls the translation of the L11 operon by binding to its mRNA.</text>
</comment>
<comment type="subunit">
    <text evidence="1">Part of the 50S ribosomal subunit.</text>
</comment>
<comment type="similarity">
    <text evidence="1">Belongs to the universal ribosomal protein uL1 family.</text>
</comment>
<reference key="1">
    <citation type="submission" date="2007-02" db="EMBL/GenBank/DDBJ databases">
        <title>Complete sequence of Clostridium thermocellum ATCC 27405.</title>
        <authorList>
            <consortium name="US DOE Joint Genome Institute"/>
            <person name="Copeland A."/>
            <person name="Lucas S."/>
            <person name="Lapidus A."/>
            <person name="Barry K."/>
            <person name="Detter J.C."/>
            <person name="Glavina del Rio T."/>
            <person name="Hammon N."/>
            <person name="Israni S."/>
            <person name="Dalin E."/>
            <person name="Tice H."/>
            <person name="Pitluck S."/>
            <person name="Chertkov O."/>
            <person name="Brettin T."/>
            <person name="Bruce D."/>
            <person name="Han C."/>
            <person name="Tapia R."/>
            <person name="Gilna P."/>
            <person name="Schmutz J."/>
            <person name="Larimer F."/>
            <person name="Land M."/>
            <person name="Hauser L."/>
            <person name="Kyrpides N."/>
            <person name="Mikhailova N."/>
            <person name="Wu J.H.D."/>
            <person name="Newcomb M."/>
            <person name="Richardson P."/>
        </authorList>
    </citation>
    <scope>NUCLEOTIDE SEQUENCE [LARGE SCALE GENOMIC DNA]</scope>
    <source>
        <strain>ATCC 27405 / DSM 1237 / JCM 9322 / NBRC 103400 / NCIMB 10682 / NRRL B-4536 / VPI 7372</strain>
    </source>
</reference>
<keyword id="KW-1185">Reference proteome</keyword>
<keyword id="KW-0678">Repressor</keyword>
<keyword id="KW-0687">Ribonucleoprotein</keyword>
<keyword id="KW-0689">Ribosomal protein</keyword>
<keyword id="KW-0694">RNA-binding</keyword>
<keyword id="KW-0699">rRNA-binding</keyword>
<keyword id="KW-0810">Translation regulation</keyword>
<keyword id="KW-0820">tRNA-binding</keyword>
<name>RL1_ACET2</name>
<organism>
    <name type="scientific">Acetivibrio thermocellus (strain ATCC 27405 / DSM 1237 / JCM 9322 / NBRC 103400 / NCIMB 10682 / NRRL B-4536 / VPI 7372)</name>
    <name type="common">Clostridium thermocellum</name>
    <dbReference type="NCBI Taxonomy" id="203119"/>
    <lineage>
        <taxon>Bacteria</taxon>
        <taxon>Bacillati</taxon>
        <taxon>Bacillota</taxon>
        <taxon>Clostridia</taxon>
        <taxon>Eubacteriales</taxon>
        <taxon>Oscillospiraceae</taxon>
        <taxon>Acetivibrio</taxon>
    </lineage>
</organism>
<dbReference type="EMBL" id="CP000568">
    <property type="protein sequence ID" value="ABN53920.1"/>
    <property type="molecule type" value="Genomic_DNA"/>
</dbReference>
<dbReference type="RefSeq" id="WP_003515020.1">
    <property type="nucleotide sequence ID" value="NC_009012.1"/>
</dbReference>
<dbReference type="SMR" id="A3DIZ1"/>
<dbReference type="STRING" id="203119.Cthe_2721"/>
<dbReference type="GeneID" id="35805437"/>
<dbReference type="KEGG" id="cth:Cthe_2721"/>
<dbReference type="eggNOG" id="COG0081">
    <property type="taxonomic scope" value="Bacteria"/>
</dbReference>
<dbReference type="HOGENOM" id="CLU_062853_0_0_9"/>
<dbReference type="OrthoDB" id="9803740at2"/>
<dbReference type="Proteomes" id="UP000002145">
    <property type="component" value="Chromosome"/>
</dbReference>
<dbReference type="GO" id="GO:0015934">
    <property type="term" value="C:large ribosomal subunit"/>
    <property type="evidence" value="ECO:0007669"/>
    <property type="project" value="InterPro"/>
</dbReference>
<dbReference type="GO" id="GO:0019843">
    <property type="term" value="F:rRNA binding"/>
    <property type="evidence" value="ECO:0007669"/>
    <property type="project" value="UniProtKB-UniRule"/>
</dbReference>
<dbReference type="GO" id="GO:0003735">
    <property type="term" value="F:structural constituent of ribosome"/>
    <property type="evidence" value="ECO:0007669"/>
    <property type="project" value="InterPro"/>
</dbReference>
<dbReference type="GO" id="GO:0000049">
    <property type="term" value="F:tRNA binding"/>
    <property type="evidence" value="ECO:0007669"/>
    <property type="project" value="UniProtKB-KW"/>
</dbReference>
<dbReference type="GO" id="GO:0006417">
    <property type="term" value="P:regulation of translation"/>
    <property type="evidence" value="ECO:0007669"/>
    <property type="project" value="UniProtKB-KW"/>
</dbReference>
<dbReference type="GO" id="GO:0006412">
    <property type="term" value="P:translation"/>
    <property type="evidence" value="ECO:0007669"/>
    <property type="project" value="UniProtKB-UniRule"/>
</dbReference>
<dbReference type="CDD" id="cd00403">
    <property type="entry name" value="Ribosomal_L1"/>
    <property type="match status" value="1"/>
</dbReference>
<dbReference type="FunFam" id="3.40.50.790:FF:000001">
    <property type="entry name" value="50S ribosomal protein L1"/>
    <property type="match status" value="1"/>
</dbReference>
<dbReference type="Gene3D" id="3.30.190.20">
    <property type="match status" value="1"/>
</dbReference>
<dbReference type="Gene3D" id="3.40.50.790">
    <property type="match status" value="1"/>
</dbReference>
<dbReference type="HAMAP" id="MF_01318_B">
    <property type="entry name" value="Ribosomal_uL1_B"/>
    <property type="match status" value="1"/>
</dbReference>
<dbReference type="InterPro" id="IPR005878">
    <property type="entry name" value="Ribosom_uL1_bac-type"/>
</dbReference>
<dbReference type="InterPro" id="IPR002143">
    <property type="entry name" value="Ribosomal_uL1"/>
</dbReference>
<dbReference type="InterPro" id="IPR023674">
    <property type="entry name" value="Ribosomal_uL1-like"/>
</dbReference>
<dbReference type="InterPro" id="IPR028364">
    <property type="entry name" value="Ribosomal_uL1/biogenesis"/>
</dbReference>
<dbReference type="InterPro" id="IPR016095">
    <property type="entry name" value="Ribosomal_uL1_3-a/b-sand"/>
</dbReference>
<dbReference type="InterPro" id="IPR023673">
    <property type="entry name" value="Ribosomal_uL1_CS"/>
</dbReference>
<dbReference type="NCBIfam" id="TIGR01169">
    <property type="entry name" value="rplA_bact"/>
    <property type="match status" value="1"/>
</dbReference>
<dbReference type="PANTHER" id="PTHR36427">
    <property type="entry name" value="54S RIBOSOMAL PROTEIN L1, MITOCHONDRIAL"/>
    <property type="match status" value="1"/>
</dbReference>
<dbReference type="PANTHER" id="PTHR36427:SF3">
    <property type="entry name" value="LARGE RIBOSOMAL SUBUNIT PROTEIN UL1M"/>
    <property type="match status" value="1"/>
</dbReference>
<dbReference type="Pfam" id="PF00687">
    <property type="entry name" value="Ribosomal_L1"/>
    <property type="match status" value="1"/>
</dbReference>
<dbReference type="PIRSF" id="PIRSF002155">
    <property type="entry name" value="Ribosomal_L1"/>
    <property type="match status" value="1"/>
</dbReference>
<dbReference type="SUPFAM" id="SSF56808">
    <property type="entry name" value="Ribosomal protein L1"/>
    <property type="match status" value="1"/>
</dbReference>
<dbReference type="PROSITE" id="PS01199">
    <property type="entry name" value="RIBOSOMAL_L1"/>
    <property type="match status" value="1"/>
</dbReference>
<sequence length="231" mass="25073">MKRGKKYQESVKLVDKTKLYDPVEAMELVQKTAKAKFDETVEAHIRLGVDSRHADQQVRGAVVLPHGTGKKVRVLVFAKGEKATEAEKAGADYVGAEELVSKIQNENWFEFDVVVATPDMMGVVGRLGKVLGPKGLMPNPKAGTVTMDVAKAIADIKAGKIEYRLDKTNIIHCPIGKVSFGTEKLVDNFRTLMSAIIKAKPAAAKGQYLKSVVVTSTMGPGIKVNPLRVSE</sequence>